<sequence>MAASMAHYQGHLSNRITTGRAETVGQAQYPPRRAERKYKLEVEQQPIRARMCGFGDKDRRPITPPPCIRLVVLDEMDRELDFNEIDSTYFVLMVDLWNESGQSAVNLVRHSSAAPTVSISSSTTTSYPPPPERSHYVATTIPGYDAHSQAYRHQQHQHQHQHQHMQPQPMAAAGYGPGAHTGVAVPPYYPPTPQPPTPTYQQYPAPAPAAPYGQAPAPSAMIPATPMSSNHTRNLIGMNAVNACRLNDTKNKPGFWFVLQDLSVRTEGTFRLKLFLFDIGAGDGTNATVAADGPTRGKGKCLAVNFSDPFTVYSAKKFPGVIESTPLSKCFAQQGIKIPIRKDGPKLPNQAEYDADD</sequence>
<protein>
    <recommendedName>
        <fullName evidence="5">Velvet complex subunit 2</fullName>
    </recommendedName>
</protein>
<name>VELB_COCH5</name>
<comment type="function">
    <text evidence="1 3">Component of the velvet transcription factor complex that controls sexual/asexual developmental ratio in response to light, promoting sexual development in the darkness while stimulating asexual sporulation under illumination (PubMed:25080135). The velvet complex acts as a global regulator for secondary metabolite gene expression (By similarity). Component of the VEL2-VOS1 heterodimeric complex that plays a dual role in activating genes associated with spore maturation and repressing certain development-associated genes (By similarity). The complex binds DNA through the DNA-binding domain of VOS1 that recognizes an 11-nucleotide consensus sequence 5'-CTGGCCGCGGC-3' consisting of two motifs in the promoters of key developmental regulatory genes (By similarity). The VEL2-VOS1 complex is required for normal pseudothecium development and regulates asexual spore compartmentalization, pigmentation and germination (PubMed:25080135).</text>
</comment>
<comment type="subunit">
    <text evidence="1">Component of the heterotrimeric velvet complex composed of LAE1, VEL1 and VEL2; VEL1A acting as a bridging protein between LAE1 and VEL2 (By similarity). Forms a heterodimeric complex with VOS1; the formation of the VEL2-VOS1 complex is light-dependent (By similarity).</text>
</comment>
<comment type="subcellular location">
    <subcellularLocation>
        <location evidence="1">Nucleus</location>
    </subcellularLocation>
    <subcellularLocation>
        <location evidence="1">Cytoplasm</location>
    </subcellularLocation>
    <text evidence="1">Nuclear localization is mediated by VEL1 (By similarity).</text>
</comment>
<comment type="disruption phenotype">
    <text evidence="3">Produces only albino pseudothecia (PubMed:25080135). reduces tolerance to oxidative and thermal stresses (PubMed:25080135). Leads to increased expression of VOS1 (PubMed:25080135).</text>
</comment>
<comment type="similarity">
    <text evidence="5">Belongs to the velvet family. VelB subfamily.</text>
</comment>
<dbReference type="EMBL" id="KB445593">
    <property type="protein sequence ID" value="EMD85134.1"/>
    <property type="molecule type" value="Genomic_DNA"/>
</dbReference>
<dbReference type="SMR" id="M2TF54"/>
<dbReference type="STRING" id="701091.M2TF54"/>
<dbReference type="eggNOG" id="ENOG502S1B4">
    <property type="taxonomic scope" value="Eukaryota"/>
</dbReference>
<dbReference type="HOGENOM" id="CLU_022491_0_0_1"/>
<dbReference type="OMA" id="YQDGRSW"/>
<dbReference type="OrthoDB" id="24513at28556"/>
<dbReference type="Proteomes" id="UP000016936">
    <property type="component" value="Unassembled WGS sequence"/>
</dbReference>
<dbReference type="GO" id="GO:0005737">
    <property type="term" value="C:cytoplasm"/>
    <property type="evidence" value="ECO:0007669"/>
    <property type="project" value="UniProtKB-SubCell"/>
</dbReference>
<dbReference type="GO" id="GO:0005634">
    <property type="term" value="C:nucleus"/>
    <property type="evidence" value="ECO:0007669"/>
    <property type="project" value="UniProtKB-SubCell"/>
</dbReference>
<dbReference type="GO" id="GO:0030435">
    <property type="term" value="P:sporulation resulting in formation of a cellular spore"/>
    <property type="evidence" value="ECO:0007669"/>
    <property type="project" value="UniProtKB-KW"/>
</dbReference>
<dbReference type="Gene3D" id="2.60.40.3960">
    <property type="entry name" value="Velvet domain"/>
    <property type="match status" value="2"/>
</dbReference>
<dbReference type="InterPro" id="IPR021740">
    <property type="entry name" value="Velvet"/>
</dbReference>
<dbReference type="InterPro" id="IPR037525">
    <property type="entry name" value="Velvet_dom"/>
</dbReference>
<dbReference type="InterPro" id="IPR038491">
    <property type="entry name" value="Velvet_dom_sf"/>
</dbReference>
<dbReference type="PANTHER" id="PTHR33572">
    <property type="entry name" value="SPORE DEVELOPMENT REGULATOR VOSA"/>
    <property type="match status" value="1"/>
</dbReference>
<dbReference type="PANTHER" id="PTHR33572:SF3">
    <property type="entry name" value="VELVET COMPLEX SUBUNIT B"/>
    <property type="match status" value="1"/>
</dbReference>
<dbReference type="Pfam" id="PF11754">
    <property type="entry name" value="Velvet"/>
    <property type="match status" value="1"/>
</dbReference>
<dbReference type="PROSITE" id="PS51821">
    <property type="entry name" value="VELVET"/>
    <property type="match status" value="1"/>
</dbReference>
<feature type="chain" id="PRO_0000435784" description="Velvet complex subunit 2">
    <location>
        <begin position="1"/>
        <end position="357"/>
    </location>
</feature>
<feature type="domain" description="Velvet" evidence="2">
    <location>
        <begin position="32"/>
        <end position="341"/>
    </location>
</feature>
<reference key="1">
    <citation type="journal article" date="2012" name="PLoS Pathog.">
        <title>Diverse lifestyles and strategies of plant pathogenesis encoded in the genomes of eighteen Dothideomycetes fungi.</title>
        <authorList>
            <person name="Ohm R.A."/>
            <person name="Feau N."/>
            <person name="Henrissat B."/>
            <person name="Schoch C.L."/>
            <person name="Horwitz B.A."/>
            <person name="Barry K.W."/>
            <person name="Condon B.J."/>
            <person name="Copeland A.C."/>
            <person name="Dhillon B."/>
            <person name="Glaser F."/>
            <person name="Hesse C.N."/>
            <person name="Kosti I."/>
            <person name="LaButti K."/>
            <person name="Lindquist E.A."/>
            <person name="Lucas S."/>
            <person name="Salamov A.A."/>
            <person name="Bradshaw R.E."/>
            <person name="Ciuffetti L."/>
            <person name="Hamelin R.C."/>
            <person name="Kema G.H.J."/>
            <person name="Lawrence C."/>
            <person name="Scott J.A."/>
            <person name="Spatafora J.W."/>
            <person name="Turgeon B.G."/>
            <person name="de Wit P.J.G.M."/>
            <person name="Zhong S."/>
            <person name="Goodwin S.B."/>
            <person name="Grigoriev I.V."/>
        </authorList>
    </citation>
    <scope>NUCLEOTIDE SEQUENCE [LARGE SCALE GENOMIC DNA]</scope>
    <source>
        <strain>C5 / ATCC 48332 / race O</strain>
    </source>
</reference>
<reference key="2">
    <citation type="journal article" date="2013" name="PLoS Genet.">
        <title>Comparative genome structure, secondary metabolite, and effector coding capacity across Cochliobolus pathogens.</title>
        <authorList>
            <person name="Condon B.J."/>
            <person name="Leng Y."/>
            <person name="Wu D."/>
            <person name="Bushley K.E."/>
            <person name="Ohm R.A."/>
            <person name="Otillar R."/>
            <person name="Martin J."/>
            <person name="Schackwitz W."/>
            <person name="Grimwood J."/>
            <person name="MohdZainudin N."/>
            <person name="Xue C."/>
            <person name="Wang R."/>
            <person name="Manning V.A."/>
            <person name="Dhillon B."/>
            <person name="Tu Z.J."/>
            <person name="Steffenson B.J."/>
            <person name="Salamov A."/>
            <person name="Sun H."/>
            <person name="Lowry S."/>
            <person name="LaButti K."/>
            <person name="Han J."/>
            <person name="Copeland A."/>
            <person name="Lindquist E."/>
            <person name="Barry K."/>
            <person name="Schmutz J."/>
            <person name="Baker S.E."/>
            <person name="Ciuffetti L.M."/>
            <person name="Grigoriev I.V."/>
            <person name="Zhong S."/>
            <person name="Turgeon B.G."/>
        </authorList>
    </citation>
    <scope>NUCLEOTIDE SEQUENCE [LARGE SCALE GENOMIC DNA]</scope>
    <source>
        <strain>C5 / ATCC 48332 / race O</strain>
    </source>
</reference>
<reference key="3">
    <citation type="journal article" date="2014" name="Fungal Genet. Biol.">
        <title>Vel2 and Vos1 hold essential roles in ascospore and asexual spore development of the heterothallic maize pathogen Cochliobolus heterostrophus.</title>
        <authorList>
            <person name="Wang W."/>
            <person name="Wu D."/>
            <person name="Pan H."/>
            <person name="Turgeon B.G."/>
        </authorList>
    </citation>
    <scope>FUNCTION</scope>
    <scope>DISRUPTION PHENOTYPE</scope>
</reference>
<keyword id="KW-0963">Cytoplasm</keyword>
<keyword id="KW-0539">Nucleus</keyword>
<keyword id="KW-1185">Reference proteome</keyword>
<keyword id="KW-0749">Sporulation</keyword>
<keyword id="KW-0804">Transcription</keyword>
<keyword id="KW-0805">Transcription regulation</keyword>
<gene>
    <name evidence="4" type="primary">VEL2</name>
    <name type="ORF">COCHEDRAFT_33742</name>
</gene>
<accession>M2TF54</accession>
<organism>
    <name type="scientific">Cochliobolus heterostrophus (strain C5 / ATCC 48332 / race O)</name>
    <name type="common">Southern corn leaf blight fungus</name>
    <name type="synonym">Bipolaris maydis</name>
    <dbReference type="NCBI Taxonomy" id="701091"/>
    <lineage>
        <taxon>Eukaryota</taxon>
        <taxon>Fungi</taxon>
        <taxon>Dikarya</taxon>
        <taxon>Ascomycota</taxon>
        <taxon>Pezizomycotina</taxon>
        <taxon>Dothideomycetes</taxon>
        <taxon>Pleosporomycetidae</taxon>
        <taxon>Pleosporales</taxon>
        <taxon>Pleosporineae</taxon>
        <taxon>Pleosporaceae</taxon>
        <taxon>Bipolaris</taxon>
    </lineage>
</organism>
<evidence type="ECO:0000250" key="1">
    <source>
        <dbReference type="UniProtKB" id="C8VTS4"/>
    </source>
</evidence>
<evidence type="ECO:0000255" key="2">
    <source>
        <dbReference type="PROSITE-ProRule" id="PRU01165"/>
    </source>
</evidence>
<evidence type="ECO:0000269" key="3">
    <source>
    </source>
</evidence>
<evidence type="ECO:0000303" key="4">
    <source>
    </source>
</evidence>
<evidence type="ECO:0000305" key="5"/>
<proteinExistence type="inferred from homology"/>